<accession>Q5M8S7</accession>
<protein>
    <recommendedName>
        <fullName>Zinc finger C3HC-type protein 1-like</fullName>
    </recommendedName>
    <alternativeName>
        <fullName>NIPA-like protein</fullName>
    </alternativeName>
</protein>
<feature type="chain" id="PRO_0000096853" description="Zinc finger C3HC-type protein 1-like">
    <location>
        <begin position="1"/>
        <end position="478"/>
    </location>
</feature>
<feature type="zinc finger region" description="C3HC-type">
    <location>
        <begin position="93"/>
        <end position="147"/>
    </location>
</feature>
<feature type="region of interest" description="Disordered" evidence="2">
    <location>
        <begin position="285"/>
        <end position="389"/>
    </location>
</feature>
<feature type="compositionally biased region" description="Polar residues" evidence="2">
    <location>
        <begin position="351"/>
        <end position="363"/>
    </location>
</feature>
<feature type="compositionally biased region" description="Low complexity" evidence="2">
    <location>
        <begin position="377"/>
        <end position="388"/>
    </location>
</feature>
<reference key="1">
    <citation type="submission" date="2004-12" db="EMBL/GenBank/DDBJ databases">
        <authorList>
            <consortium name="NIH - Xenopus Gene Collection (XGC) project"/>
        </authorList>
    </citation>
    <scope>NUCLEOTIDE SEQUENCE [LARGE SCALE MRNA]</scope>
    <source>
        <tissue>Embryo</tissue>
    </source>
</reference>
<name>ZC3C1_XENTR</name>
<evidence type="ECO:0000250" key="1">
    <source>
        <dbReference type="UniProtKB" id="Q86WB0"/>
    </source>
</evidence>
<evidence type="ECO:0000256" key="2">
    <source>
        <dbReference type="SAM" id="MobiDB-lite"/>
    </source>
</evidence>
<proteinExistence type="evidence at transcript level"/>
<sequence length="478" mass="53190">MATSCEDVSPVKSPAVTPLKIRELINEGIVTGERSSIGRKETAVVPEENNGFEDPLSNSSYESTSKDAFFGRVESFSSLKWAGKPSELCPLICAKYGWSNIECDMLKCSSCNAYLCASLQPVLDFSKYKQRCVELQEALRKAHEKFCFWPDSPCPDYFWALMVTEPSSVLSDFVGRFDNLCHLEIQLPSIKHEDLKNMDITEETVSHLLRLIEDELKSKDGREDNSRLASDSLQVHISACILALCGWSTSYTSGSLCIINCPRCMRKVGLWAFQQLEAVELDNSLSAPNTPVSPAEGHERSPFGIMSPNRRVTRSRDAEQSPALAYGRTRSSDLLSPADSEAVRSRPVTRSMGQGESSGLSNELHSSPLRRSKRPRLCSSSSSDTSPRGCFDPLSQHRSWCPWVNVCQASETSTLGSEIQEEASRKEYGWKEVLNVLLAEENSRTLSDPDTSSVPEKSHKVFRIFRQWQMAASASENP</sequence>
<keyword id="KW-0131">Cell cycle</keyword>
<keyword id="KW-0132">Cell division</keyword>
<keyword id="KW-0479">Metal-binding</keyword>
<keyword id="KW-0498">Mitosis</keyword>
<keyword id="KW-0539">Nucleus</keyword>
<keyword id="KW-1185">Reference proteome</keyword>
<keyword id="KW-0833">Ubl conjugation pathway</keyword>
<keyword id="KW-0862">Zinc</keyword>
<keyword id="KW-0863">Zinc-finger</keyword>
<dbReference type="EMBL" id="BC087863">
    <property type="protein sequence ID" value="AAH87863.1"/>
    <property type="molecule type" value="mRNA"/>
</dbReference>
<dbReference type="RefSeq" id="NP_001011259.1">
    <property type="nucleotide sequence ID" value="NM_001011259.1"/>
</dbReference>
<dbReference type="FunCoup" id="Q5M8S7">
    <property type="interactions" value="2738"/>
</dbReference>
<dbReference type="STRING" id="8364.ENSXETP00000054808"/>
<dbReference type="PaxDb" id="8364-ENSXETP00000059993"/>
<dbReference type="DNASU" id="496709"/>
<dbReference type="GeneID" id="496709"/>
<dbReference type="KEGG" id="xtr:496709"/>
<dbReference type="AGR" id="Xenbase:XB-GENE-948885"/>
<dbReference type="CTD" id="51530"/>
<dbReference type="Xenbase" id="XB-GENE-948885">
    <property type="gene designation" value="zc3hc1"/>
</dbReference>
<dbReference type="eggNOG" id="KOG4765">
    <property type="taxonomic scope" value="Eukaryota"/>
</dbReference>
<dbReference type="InParanoid" id="Q5M8S7"/>
<dbReference type="OMA" id="EWCPWIS"/>
<dbReference type="OrthoDB" id="614844at2759"/>
<dbReference type="Proteomes" id="UP000008143">
    <property type="component" value="Chromosome 3"/>
</dbReference>
<dbReference type="GO" id="GO:0005635">
    <property type="term" value="C:nuclear envelope"/>
    <property type="evidence" value="ECO:0007669"/>
    <property type="project" value="UniProtKB-SubCell"/>
</dbReference>
<dbReference type="GO" id="GO:0008270">
    <property type="term" value="F:zinc ion binding"/>
    <property type="evidence" value="ECO:0007669"/>
    <property type="project" value="UniProtKB-KW"/>
</dbReference>
<dbReference type="GO" id="GO:0051301">
    <property type="term" value="P:cell division"/>
    <property type="evidence" value="ECO:0007669"/>
    <property type="project" value="UniProtKB-KW"/>
</dbReference>
<dbReference type="GO" id="GO:0016567">
    <property type="term" value="P:protein ubiquitination"/>
    <property type="evidence" value="ECO:0007669"/>
    <property type="project" value="UniProtKB-UniPathway"/>
</dbReference>
<dbReference type="InterPro" id="IPR013909">
    <property type="entry name" value="NuBaID_C"/>
</dbReference>
<dbReference type="InterPro" id="IPR012935">
    <property type="entry name" value="NuBaID_N"/>
</dbReference>
<dbReference type="PANTHER" id="PTHR15835">
    <property type="entry name" value="NUCLEAR-INTERACTING PARTNER OF ALK"/>
    <property type="match status" value="1"/>
</dbReference>
<dbReference type="PANTHER" id="PTHR15835:SF6">
    <property type="entry name" value="ZINC FINGER C3HC-TYPE PROTEIN 1"/>
    <property type="match status" value="1"/>
</dbReference>
<dbReference type="Pfam" id="PF08600">
    <property type="entry name" value="NuBaID_C"/>
    <property type="match status" value="1"/>
</dbReference>
<dbReference type="Pfam" id="PF07967">
    <property type="entry name" value="zf-C3HC"/>
    <property type="match status" value="1"/>
</dbReference>
<organism>
    <name type="scientific">Xenopus tropicalis</name>
    <name type="common">Western clawed frog</name>
    <name type="synonym">Silurana tropicalis</name>
    <dbReference type="NCBI Taxonomy" id="8364"/>
    <lineage>
        <taxon>Eukaryota</taxon>
        <taxon>Metazoa</taxon>
        <taxon>Chordata</taxon>
        <taxon>Craniata</taxon>
        <taxon>Vertebrata</taxon>
        <taxon>Euteleostomi</taxon>
        <taxon>Amphibia</taxon>
        <taxon>Batrachia</taxon>
        <taxon>Anura</taxon>
        <taxon>Pipoidea</taxon>
        <taxon>Pipidae</taxon>
        <taxon>Xenopodinae</taxon>
        <taxon>Xenopus</taxon>
        <taxon>Silurana</taxon>
    </lineage>
</organism>
<comment type="function">
    <text evidence="1">Required for proper positioning of a substantial amount of TPR at the nuclear basket (NB) through interaction with TPR.</text>
</comment>
<comment type="subcellular location">
    <subcellularLocation>
        <location evidence="1">Nucleus</location>
    </subcellularLocation>
    <subcellularLocation>
        <location evidence="1">Nucleus envelope</location>
    </subcellularLocation>
    <text evidence="1">Resident of the nuclear basket (NB). Occurs at the nuclear envelopes (NE) of all TPR-containing cell types, including proliferating and non-dividing, terminally differentiated cells of different morphogenetic origin.</text>
</comment>
<comment type="PTM">
    <text evidence="1">Phosphorylated. May also be weakly phosphorylated on Tyr residues.</text>
</comment>
<gene>
    <name type="primary">zc3hc1</name>
    <name type="synonym">nipa</name>
</gene>